<accession>A0PMY7</accession>
<comment type="similarity">
    <text evidence="1">Belongs to the methyltransferase superfamily.</text>
</comment>
<evidence type="ECO:0000305" key="1"/>
<feature type="chain" id="PRO_0000380610" description="Uncharacterized methyltransferase MUL_1123">
    <location>
        <begin position="1"/>
        <end position="255"/>
    </location>
</feature>
<sequence>MAVTDRFARRATLSRSLRLLSEFRYEQPDPARFYGALAADTATLVSDLWLAARGESVAGRTLLDVGGGPGYFASAFAAAGVGYIGVEPDPNEMHAAGPAHAGGPGSFVRASGMALPLADDSVDICLSSNVAEHVPRPWQLGAEMLRVTRPGGLAVLSYTVWLGPFGGHEMGLSHYLGGARAAARYARRHGHPAKNNYGSSLFAVSAAEGLRWAEGTGTLIAAFPRYHPRSAWWMTSVPMLREFLVSNLVLVLSPR</sequence>
<name>Y1123_MYCUA</name>
<reference key="1">
    <citation type="journal article" date="2007" name="Genome Res.">
        <title>Reductive evolution and niche adaptation inferred from the genome of Mycobacterium ulcerans, the causative agent of Buruli ulcer.</title>
        <authorList>
            <person name="Stinear T.P."/>
            <person name="Seemann T."/>
            <person name="Pidot S."/>
            <person name="Frigui W."/>
            <person name="Reysset G."/>
            <person name="Garnier T."/>
            <person name="Meurice G."/>
            <person name="Simon D."/>
            <person name="Bouchier C."/>
            <person name="Ma L."/>
            <person name="Tichit M."/>
            <person name="Porter J.L."/>
            <person name="Ryan J."/>
            <person name="Johnson P.D.R."/>
            <person name="Davies J.K."/>
            <person name="Jenkin G.A."/>
            <person name="Small P.L.C."/>
            <person name="Jones L.M."/>
            <person name="Tekaia F."/>
            <person name="Laval F."/>
            <person name="Daffe M."/>
            <person name="Parkhill J."/>
            <person name="Cole S.T."/>
        </authorList>
    </citation>
    <scope>NUCLEOTIDE SEQUENCE [LARGE SCALE GENOMIC DNA]</scope>
    <source>
        <strain>Agy99</strain>
    </source>
</reference>
<dbReference type="EC" id="2.1.1.-"/>
<dbReference type="EMBL" id="CP000325">
    <property type="protein sequence ID" value="ABL03706.1"/>
    <property type="molecule type" value="Genomic_DNA"/>
</dbReference>
<dbReference type="RefSeq" id="WP_011739328.1">
    <property type="nucleotide sequence ID" value="NC_008611.1"/>
</dbReference>
<dbReference type="KEGG" id="mul:MUL_1123"/>
<dbReference type="eggNOG" id="COG0500">
    <property type="taxonomic scope" value="Bacteria"/>
</dbReference>
<dbReference type="HOGENOM" id="CLU_073035_0_0_11"/>
<dbReference type="Proteomes" id="UP000000765">
    <property type="component" value="Chromosome"/>
</dbReference>
<dbReference type="GO" id="GO:0008757">
    <property type="term" value="F:S-adenosylmethionine-dependent methyltransferase activity"/>
    <property type="evidence" value="ECO:0007669"/>
    <property type="project" value="InterPro"/>
</dbReference>
<dbReference type="GO" id="GO:0032259">
    <property type="term" value="P:methylation"/>
    <property type="evidence" value="ECO:0007669"/>
    <property type="project" value="UniProtKB-KW"/>
</dbReference>
<dbReference type="CDD" id="cd02440">
    <property type="entry name" value="AdoMet_MTases"/>
    <property type="match status" value="1"/>
</dbReference>
<dbReference type="Gene3D" id="3.40.50.150">
    <property type="entry name" value="Vaccinia Virus protein VP39"/>
    <property type="match status" value="1"/>
</dbReference>
<dbReference type="InterPro" id="IPR013216">
    <property type="entry name" value="Methyltransf_11"/>
</dbReference>
<dbReference type="InterPro" id="IPR029063">
    <property type="entry name" value="SAM-dependent_MTases_sf"/>
</dbReference>
<dbReference type="PANTHER" id="PTHR43591:SF24">
    <property type="entry name" value="2-METHOXY-6-POLYPRENYL-1,4-BENZOQUINOL METHYLASE, MITOCHONDRIAL"/>
    <property type="match status" value="1"/>
</dbReference>
<dbReference type="PANTHER" id="PTHR43591">
    <property type="entry name" value="METHYLTRANSFERASE"/>
    <property type="match status" value="1"/>
</dbReference>
<dbReference type="Pfam" id="PF08241">
    <property type="entry name" value="Methyltransf_11"/>
    <property type="match status" value="1"/>
</dbReference>
<dbReference type="SUPFAM" id="SSF53335">
    <property type="entry name" value="S-adenosyl-L-methionine-dependent methyltransferases"/>
    <property type="match status" value="1"/>
</dbReference>
<keyword id="KW-0489">Methyltransferase</keyword>
<keyword id="KW-0808">Transferase</keyword>
<gene>
    <name type="ordered locus">MUL_1123</name>
</gene>
<organism>
    <name type="scientific">Mycobacterium ulcerans (strain Agy99)</name>
    <dbReference type="NCBI Taxonomy" id="362242"/>
    <lineage>
        <taxon>Bacteria</taxon>
        <taxon>Bacillati</taxon>
        <taxon>Actinomycetota</taxon>
        <taxon>Actinomycetes</taxon>
        <taxon>Mycobacteriales</taxon>
        <taxon>Mycobacteriaceae</taxon>
        <taxon>Mycobacterium</taxon>
        <taxon>Mycobacterium ulcerans group</taxon>
    </lineage>
</organism>
<protein>
    <recommendedName>
        <fullName>Uncharacterized methyltransferase MUL_1123</fullName>
        <ecNumber>2.1.1.-</ecNumber>
    </recommendedName>
</protein>
<proteinExistence type="inferred from homology"/>